<accession>C4L887</accession>
<reference key="1">
    <citation type="submission" date="2009-05" db="EMBL/GenBank/DDBJ databases">
        <title>Complete sequence of Tolumonas auensis DSM 9187.</title>
        <authorList>
            <consortium name="US DOE Joint Genome Institute"/>
            <person name="Lucas S."/>
            <person name="Copeland A."/>
            <person name="Lapidus A."/>
            <person name="Glavina del Rio T."/>
            <person name="Tice H."/>
            <person name="Bruce D."/>
            <person name="Goodwin L."/>
            <person name="Pitluck S."/>
            <person name="Chertkov O."/>
            <person name="Brettin T."/>
            <person name="Detter J.C."/>
            <person name="Han C."/>
            <person name="Larimer F."/>
            <person name="Land M."/>
            <person name="Hauser L."/>
            <person name="Kyrpides N."/>
            <person name="Mikhailova N."/>
            <person name="Spring S."/>
            <person name="Beller H."/>
        </authorList>
    </citation>
    <scope>NUCLEOTIDE SEQUENCE [LARGE SCALE GENOMIC DNA]</scope>
    <source>
        <strain>DSM 9187 / NBRC 110442 / TA 4</strain>
    </source>
</reference>
<evidence type="ECO:0000255" key="1">
    <source>
        <dbReference type="HAMAP-Rule" id="MF_00126"/>
    </source>
</evidence>
<feature type="chain" id="PRO_1000203125" description="Glutamine--tRNA ligase">
    <location>
        <begin position="1"/>
        <end position="553"/>
    </location>
</feature>
<feature type="short sequence motif" description="'HIGH' region" evidence="1">
    <location>
        <begin position="34"/>
        <end position="44"/>
    </location>
</feature>
<feature type="short sequence motif" description="'KMSKS' region" evidence="1">
    <location>
        <begin position="268"/>
        <end position="272"/>
    </location>
</feature>
<feature type="binding site" evidence="1">
    <location>
        <begin position="35"/>
        <end position="37"/>
    </location>
    <ligand>
        <name>ATP</name>
        <dbReference type="ChEBI" id="CHEBI:30616"/>
    </ligand>
</feature>
<feature type="binding site" evidence="1">
    <location>
        <begin position="41"/>
        <end position="47"/>
    </location>
    <ligand>
        <name>ATP</name>
        <dbReference type="ChEBI" id="CHEBI:30616"/>
    </ligand>
</feature>
<feature type="binding site" evidence="1">
    <location>
        <position position="67"/>
    </location>
    <ligand>
        <name>L-glutamine</name>
        <dbReference type="ChEBI" id="CHEBI:58359"/>
    </ligand>
</feature>
<feature type="binding site" evidence="1">
    <location>
        <position position="212"/>
    </location>
    <ligand>
        <name>L-glutamine</name>
        <dbReference type="ChEBI" id="CHEBI:58359"/>
    </ligand>
</feature>
<feature type="binding site" evidence="1">
    <location>
        <position position="231"/>
    </location>
    <ligand>
        <name>ATP</name>
        <dbReference type="ChEBI" id="CHEBI:30616"/>
    </ligand>
</feature>
<feature type="binding site" evidence="1">
    <location>
        <begin position="261"/>
        <end position="262"/>
    </location>
    <ligand>
        <name>ATP</name>
        <dbReference type="ChEBI" id="CHEBI:30616"/>
    </ligand>
</feature>
<feature type="binding site" evidence="1">
    <location>
        <begin position="269"/>
        <end position="271"/>
    </location>
    <ligand>
        <name>ATP</name>
        <dbReference type="ChEBI" id="CHEBI:30616"/>
    </ligand>
</feature>
<proteinExistence type="inferred from homology"/>
<dbReference type="EC" id="6.1.1.18" evidence="1"/>
<dbReference type="EMBL" id="CP001616">
    <property type="protein sequence ID" value="ACQ93733.1"/>
    <property type="molecule type" value="Genomic_DNA"/>
</dbReference>
<dbReference type="RefSeq" id="WP_015879201.1">
    <property type="nucleotide sequence ID" value="NC_012691.1"/>
</dbReference>
<dbReference type="SMR" id="C4L887"/>
<dbReference type="STRING" id="595494.Tola_2134"/>
<dbReference type="KEGG" id="tau:Tola_2134"/>
<dbReference type="eggNOG" id="COG0008">
    <property type="taxonomic scope" value="Bacteria"/>
</dbReference>
<dbReference type="HOGENOM" id="CLU_001882_2_3_6"/>
<dbReference type="OrthoDB" id="9801560at2"/>
<dbReference type="Proteomes" id="UP000009073">
    <property type="component" value="Chromosome"/>
</dbReference>
<dbReference type="GO" id="GO:0005829">
    <property type="term" value="C:cytosol"/>
    <property type="evidence" value="ECO:0007669"/>
    <property type="project" value="TreeGrafter"/>
</dbReference>
<dbReference type="GO" id="GO:0005524">
    <property type="term" value="F:ATP binding"/>
    <property type="evidence" value="ECO:0007669"/>
    <property type="project" value="UniProtKB-UniRule"/>
</dbReference>
<dbReference type="GO" id="GO:0004819">
    <property type="term" value="F:glutamine-tRNA ligase activity"/>
    <property type="evidence" value="ECO:0007669"/>
    <property type="project" value="UniProtKB-UniRule"/>
</dbReference>
<dbReference type="GO" id="GO:0006425">
    <property type="term" value="P:glutaminyl-tRNA aminoacylation"/>
    <property type="evidence" value="ECO:0007669"/>
    <property type="project" value="InterPro"/>
</dbReference>
<dbReference type="GO" id="GO:0006424">
    <property type="term" value="P:glutamyl-tRNA aminoacylation"/>
    <property type="evidence" value="ECO:0007669"/>
    <property type="project" value="UniProtKB-UniRule"/>
</dbReference>
<dbReference type="CDD" id="cd00807">
    <property type="entry name" value="GlnRS_core"/>
    <property type="match status" value="1"/>
</dbReference>
<dbReference type="FunFam" id="1.10.1160.10:FF:000001">
    <property type="entry name" value="Glutamine--tRNA ligase"/>
    <property type="match status" value="1"/>
</dbReference>
<dbReference type="FunFam" id="2.40.240.10:FF:000001">
    <property type="entry name" value="Glutamine--tRNA ligase"/>
    <property type="match status" value="1"/>
</dbReference>
<dbReference type="FunFam" id="3.90.800.10:FF:000001">
    <property type="entry name" value="Glutamine--tRNA ligase"/>
    <property type="match status" value="1"/>
</dbReference>
<dbReference type="FunFam" id="3.40.50.620:FF:000037">
    <property type="entry name" value="Glutamine--tRNA ligase cytoplasmic"/>
    <property type="match status" value="1"/>
</dbReference>
<dbReference type="Gene3D" id="1.10.1160.10">
    <property type="entry name" value="Glutamyl-trna Synthetase, Domain 2"/>
    <property type="match status" value="1"/>
</dbReference>
<dbReference type="Gene3D" id="3.90.800.10">
    <property type="entry name" value="Glutamyl-tRNA Synthetase, Domain 3"/>
    <property type="match status" value="1"/>
</dbReference>
<dbReference type="Gene3D" id="3.40.50.620">
    <property type="entry name" value="HUPs"/>
    <property type="match status" value="1"/>
</dbReference>
<dbReference type="Gene3D" id="2.40.240.10">
    <property type="entry name" value="Ribosomal Protein L25, Chain P"/>
    <property type="match status" value="2"/>
</dbReference>
<dbReference type="HAMAP" id="MF_00126">
    <property type="entry name" value="Gln_tRNA_synth"/>
    <property type="match status" value="1"/>
</dbReference>
<dbReference type="InterPro" id="IPR001412">
    <property type="entry name" value="aa-tRNA-synth_I_CS"/>
</dbReference>
<dbReference type="InterPro" id="IPR004514">
    <property type="entry name" value="Gln-tRNA-synth"/>
</dbReference>
<dbReference type="InterPro" id="IPR050132">
    <property type="entry name" value="Gln/Glu-tRNA_Ligase"/>
</dbReference>
<dbReference type="InterPro" id="IPR022861">
    <property type="entry name" value="Gln_tRNA_ligase_bac"/>
</dbReference>
<dbReference type="InterPro" id="IPR000924">
    <property type="entry name" value="Glu/Gln-tRNA-synth"/>
</dbReference>
<dbReference type="InterPro" id="IPR020058">
    <property type="entry name" value="Glu/Gln-tRNA-synth_Ib_cat-dom"/>
</dbReference>
<dbReference type="InterPro" id="IPR020059">
    <property type="entry name" value="Glu/Gln-tRNA-synth_Ib_codon-bd"/>
</dbReference>
<dbReference type="InterPro" id="IPR020061">
    <property type="entry name" value="Glu_tRNA_lig_a-bdl"/>
</dbReference>
<dbReference type="InterPro" id="IPR020056">
    <property type="entry name" value="Rbsml_bL25/Gln-tRNA_synth_N"/>
</dbReference>
<dbReference type="InterPro" id="IPR011035">
    <property type="entry name" value="Ribosomal_bL25/Gln-tRNA_synth"/>
</dbReference>
<dbReference type="InterPro" id="IPR014729">
    <property type="entry name" value="Rossmann-like_a/b/a_fold"/>
</dbReference>
<dbReference type="InterPro" id="IPR049437">
    <property type="entry name" value="tRNA-synt_1c_C2"/>
</dbReference>
<dbReference type="NCBIfam" id="TIGR00440">
    <property type="entry name" value="glnS"/>
    <property type="match status" value="1"/>
</dbReference>
<dbReference type="NCBIfam" id="NF011291">
    <property type="entry name" value="PRK14703.1"/>
    <property type="match status" value="1"/>
</dbReference>
<dbReference type="PANTHER" id="PTHR43097:SF5">
    <property type="entry name" value="GLUTAMATE--TRNA LIGASE"/>
    <property type="match status" value="1"/>
</dbReference>
<dbReference type="PANTHER" id="PTHR43097">
    <property type="entry name" value="GLUTAMINE-TRNA LIGASE"/>
    <property type="match status" value="1"/>
</dbReference>
<dbReference type="Pfam" id="PF00749">
    <property type="entry name" value="tRNA-synt_1c"/>
    <property type="match status" value="1"/>
</dbReference>
<dbReference type="Pfam" id="PF03950">
    <property type="entry name" value="tRNA-synt_1c_C"/>
    <property type="match status" value="1"/>
</dbReference>
<dbReference type="Pfam" id="PF20974">
    <property type="entry name" value="tRNA-synt_1c_C2"/>
    <property type="match status" value="1"/>
</dbReference>
<dbReference type="PRINTS" id="PR00987">
    <property type="entry name" value="TRNASYNTHGLU"/>
</dbReference>
<dbReference type="SUPFAM" id="SSF52374">
    <property type="entry name" value="Nucleotidylyl transferase"/>
    <property type="match status" value="1"/>
</dbReference>
<dbReference type="SUPFAM" id="SSF50715">
    <property type="entry name" value="Ribosomal protein L25-like"/>
    <property type="match status" value="1"/>
</dbReference>
<dbReference type="PROSITE" id="PS00178">
    <property type="entry name" value="AA_TRNA_LIGASE_I"/>
    <property type="match status" value="1"/>
</dbReference>
<keyword id="KW-0030">Aminoacyl-tRNA synthetase</keyword>
<keyword id="KW-0067">ATP-binding</keyword>
<keyword id="KW-0963">Cytoplasm</keyword>
<keyword id="KW-0436">Ligase</keyword>
<keyword id="KW-0547">Nucleotide-binding</keyword>
<keyword id="KW-0648">Protein biosynthesis</keyword>
<keyword id="KW-1185">Reference proteome</keyword>
<comment type="catalytic activity">
    <reaction evidence="1">
        <text>tRNA(Gln) + L-glutamine + ATP = L-glutaminyl-tRNA(Gln) + AMP + diphosphate</text>
        <dbReference type="Rhea" id="RHEA:20121"/>
        <dbReference type="Rhea" id="RHEA-COMP:9662"/>
        <dbReference type="Rhea" id="RHEA-COMP:9681"/>
        <dbReference type="ChEBI" id="CHEBI:30616"/>
        <dbReference type="ChEBI" id="CHEBI:33019"/>
        <dbReference type="ChEBI" id="CHEBI:58359"/>
        <dbReference type="ChEBI" id="CHEBI:78442"/>
        <dbReference type="ChEBI" id="CHEBI:78521"/>
        <dbReference type="ChEBI" id="CHEBI:456215"/>
        <dbReference type="EC" id="6.1.1.18"/>
    </reaction>
</comment>
<comment type="subunit">
    <text evidence="1">Monomer.</text>
</comment>
<comment type="subcellular location">
    <subcellularLocation>
        <location evidence="1">Cytoplasm</location>
    </subcellularLocation>
</comment>
<comment type="similarity">
    <text evidence="1">Belongs to the class-I aminoacyl-tRNA synthetase family.</text>
</comment>
<organism>
    <name type="scientific">Tolumonas auensis (strain DSM 9187 / NBRC 110442 / TA 4)</name>
    <dbReference type="NCBI Taxonomy" id="595494"/>
    <lineage>
        <taxon>Bacteria</taxon>
        <taxon>Pseudomonadati</taxon>
        <taxon>Pseudomonadota</taxon>
        <taxon>Gammaproteobacteria</taxon>
        <taxon>Aeromonadales</taxon>
        <taxon>Aeromonadaceae</taxon>
        <taxon>Tolumonas</taxon>
    </lineage>
</organism>
<name>SYQ_TOLAT</name>
<protein>
    <recommendedName>
        <fullName evidence="1">Glutamine--tRNA ligase</fullName>
        <ecNumber evidence="1">6.1.1.18</ecNumber>
    </recommendedName>
    <alternativeName>
        <fullName evidence="1">Glutaminyl-tRNA synthetase</fullName>
        <shortName evidence="1">GlnRS</shortName>
    </alternativeName>
</protein>
<gene>
    <name evidence="1" type="primary">glnS</name>
    <name type="ordered locus">Tola_2134</name>
</gene>
<sequence length="553" mass="63541">MTQAEHRPTNFIRQIIDEDLASGKHSSVATRFPPEPNGYLHIGHAKSICLNFGIARDYQGTCNLRFDDTNPVKEDVEYVESIQRDVQWLGFEWNGAVRYSSDYFDQLHAYAIELINKGLAYVEELTAEQIREYRGTLTQAGKNSPFRDRSVEENLALFEKMKDGGFKEGEACLRAKIDMASSFMVMRDPVIYRIKFAEHHQTGNKWCIYPMYDFTHCISDALEGITHSICTLEFQDNRRLYDWVLDNISIPCHPRQYEFSRLNLEYAIMSKRKLNQLVTEGVVEGWDDPRMPTVSGLRRRGYTPEAVREFCNRIGVTKQDNTVEMSALESCIREDLNERAPRAMAVLDPLRVVLENYPEDLVEELNIPNHPNIPEAGERLVPFSREIYIDRADFREEANKQYKRLVMGKEVRLRHAYIIKAERVEKDAEGNITTLYCSCDRDTLGTNPADGRKVKGVIHWVSAPHALDAEVRLYDRLFSVANPGAAEDFLSTINPQSLRIVPHAKLEPSLRDAKPEFAYQFEREGYFCADSKLSSAEKPVFNLTVALRDTWVG</sequence>